<keyword id="KW-0143">Chaperone</keyword>
<keyword id="KW-0963">Cytoplasm</keyword>
<keyword id="KW-1185">Reference proteome</keyword>
<keyword id="KW-0346">Stress response</keyword>
<accession>Q6F148</accession>
<reference key="1">
    <citation type="submission" date="2004-06" db="EMBL/GenBank/DDBJ databases">
        <authorList>
            <person name="Birren B.W."/>
            <person name="Stange-Thomann N."/>
            <person name="Hafez N."/>
            <person name="DeCaprio D."/>
            <person name="Fisher S."/>
            <person name="Butler J."/>
            <person name="Elkins T."/>
            <person name="Kodira C.D."/>
            <person name="Major J."/>
            <person name="Wang S."/>
            <person name="Nicol R."/>
            <person name="Nusbaum C."/>
        </authorList>
    </citation>
    <scope>NUCLEOTIDE SEQUENCE [LARGE SCALE GENOMIC DNA]</scope>
    <source>
        <strain>ATCC 33453 / NBRC 100688 / NCTC 11704 / L1</strain>
    </source>
</reference>
<protein>
    <recommendedName>
        <fullName evidence="1">Protein GrpE</fullName>
    </recommendedName>
    <alternativeName>
        <fullName evidence="1">HSP-70 cofactor</fullName>
    </alternativeName>
</protein>
<gene>
    <name evidence="1" type="primary">grpE</name>
    <name type="ordered locus">Mfl416</name>
</gene>
<comment type="function">
    <text evidence="1">Participates actively in the response to hyperosmotic and heat shock by preventing the aggregation of stress-denatured proteins, in association with DnaK and GrpE. It is the nucleotide exchange factor for DnaK and may function as a thermosensor. Unfolded proteins bind initially to DnaJ; upon interaction with the DnaJ-bound protein, DnaK hydrolyzes its bound ATP, resulting in the formation of a stable complex. GrpE releases ADP from DnaK; ATP binding to DnaK triggers the release of the substrate protein, thus completing the reaction cycle. Several rounds of ATP-dependent interactions between DnaJ, DnaK and GrpE are required for fully efficient folding.</text>
</comment>
<comment type="subunit">
    <text evidence="1">Homodimer.</text>
</comment>
<comment type="subcellular location">
    <subcellularLocation>
        <location evidence="1">Cytoplasm</location>
    </subcellularLocation>
</comment>
<comment type="similarity">
    <text evidence="1">Belongs to the GrpE family.</text>
</comment>
<organism>
    <name type="scientific">Mesoplasma florum (strain ATCC 33453 / NBRC 100688 / NCTC 11704 / L1)</name>
    <name type="common">Acholeplasma florum</name>
    <dbReference type="NCBI Taxonomy" id="265311"/>
    <lineage>
        <taxon>Bacteria</taxon>
        <taxon>Bacillati</taxon>
        <taxon>Mycoplasmatota</taxon>
        <taxon>Mollicutes</taxon>
        <taxon>Entomoplasmatales</taxon>
        <taxon>Entomoplasmataceae</taxon>
        <taxon>Mesoplasma</taxon>
    </lineage>
</organism>
<name>GRPE_MESFL</name>
<proteinExistence type="inferred from homology"/>
<sequence length="187" mass="21362">MNNEKELKKEETSVENKEKKVATEEIKKEKKDYKKIIQDLEKQIESCQKEIEFQKSLRNADIANLTKKRNEQEALVRKYGSSNLAEDLIKPIDLLKKVVETPTDIPELQNYLMGFKMIISQIENAFETNGIKAMGVKAGDEFDSSFHEANESLENSGMESNKIVSVISDGYMIHDRVLIHAIVKVAK</sequence>
<feature type="chain" id="PRO_0000113811" description="Protein GrpE">
    <location>
        <begin position="1"/>
        <end position="187"/>
    </location>
</feature>
<feature type="region of interest" description="Disordered" evidence="2">
    <location>
        <begin position="1"/>
        <end position="23"/>
    </location>
</feature>
<evidence type="ECO:0000255" key="1">
    <source>
        <dbReference type="HAMAP-Rule" id="MF_01151"/>
    </source>
</evidence>
<evidence type="ECO:0000256" key="2">
    <source>
        <dbReference type="SAM" id="MobiDB-lite"/>
    </source>
</evidence>
<dbReference type="EMBL" id="AE017263">
    <property type="protein sequence ID" value="AAT75775.1"/>
    <property type="molecule type" value="Genomic_DNA"/>
</dbReference>
<dbReference type="RefSeq" id="WP_011183315.1">
    <property type="nucleotide sequence ID" value="NC_006055.1"/>
</dbReference>
<dbReference type="RefSeq" id="YP_053659.1">
    <property type="nucleotide sequence ID" value="NC_006055.1"/>
</dbReference>
<dbReference type="SMR" id="Q6F148"/>
<dbReference type="STRING" id="265311.Mfl416"/>
<dbReference type="PaxDb" id="265311-Mfl416"/>
<dbReference type="EnsemblBacteria" id="AAT75775">
    <property type="protein sequence ID" value="AAT75775"/>
    <property type="gene ID" value="Mfl416"/>
</dbReference>
<dbReference type="GeneID" id="2897591"/>
<dbReference type="KEGG" id="mfl:Mfl416"/>
<dbReference type="PATRIC" id="fig|265311.5.peg.417"/>
<dbReference type="eggNOG" id="COG0576">
    <property type="taxonomic scope" value="Bacteria"/>
</dbReference>
<dbReference type="HOGENOM" id="CLU_057217_4_2_14"/>
<dbReference type="OrthoDB" id="9812586at2"/>
<dbReference type="Proteomes" id="UP000006647">
    <property type="component" value="Chromosome"/>
</dbReference>
<dbReference type="GO" id="GO:0005737">
    <property type="term" value="C:cytoplasm"/>
    <property type="evidence" value="ECO:0007669"/>
    <property type="project" value="UniProtKB-SubCell"/>
</dbReference>
<dbReference type="GO" id="GO:0000774">
    <property type="term" value="F:adenyl-nucleotide exchange factor activity"/>
    <property type="evidence" value="ECO:0007669"/>
    <property type="project" value="InterPro"/>
</dbReference>
<dbReference type="GO" id="GO:0042803">
    <property type="term" value="F:protein homodimerization activity"/>
    <property type="evidence" value="ECO:0007669"/>
    <property type="project" value="InterPro"/>
</dbReference>
<dbReference type="GO" id="GO:0051087">
    <property type="term" value="F:protein-folding chaperone binding"/>
    <property type="evidence" value="ECO:0007669"/>
    <property type="project" value="InterPro"/>
</dbReference>
<dbReference type="GO" id="GO:0051082">
    <property type="term" value="F:unfolded protein binding"/>
    <property type="evidence" value="ECO:0007669"/>
    <property type="project" value="TreeGrafter"/>
</dbReference>
<dbReference type="GO" id="GO:0006457">
    <property type="term" value="P:protein folding"/>
    <property type="evidence" value="ECO:0007669"/>
    <property type="project" value="InterPro"/>
</dbReference>
<dbReference type="CDD" id="cd00446">
    <property type="entry name" value="GrpE"/>
    <property type="match status" value="1"/>
</dbReference>
<dbReference type="Gene3D" id="3.90.20.20">
    <property type="match status" value="1"/>
</dbReference>
<dbReference type="Gene3D" id="2.30.22.10">
    <property type="entry name" value="Head domain of nucleotide exchange factor GrpE"/>
    <property type="match status" value="1"/>
</dbReference>
<dbReference type="HAMAP" id="MF_01151">
    <property type="entry name" value="GrpE"/>
    <property type="match status" value="1"/>
</dbReference>
<dbReference type="InterPro" id="IPR000740">
    <property type="entry name" value="GrpE"/>
</dbReference>
<dbReference type="InterPro" id="IPR013805">
    <property type="entry name" value="GrpE_coiled_coil"/>
</dbReference>
<dbReference type="InterPro" id="IPR009012">
    <property type="entry name" value="GrpE_head"/>
</dbReference>
<dbReference type="PANTHER" id="PTHR21237">
    <property type="entry name" value="GRPE PROTEIN"/>
    <property type="match status" value="1"/>
</dbReference>
<dbReference type="PANTHER" id="PTHR21237:SF23">
    <property type="entry name" value="GRPE PROTEIN HOMOLOG, MITOCHONDRIAL"/>
    <property type="match status" value="1"/>
</dbReference>
<dbReference type="Pfam" id="PF01025">
    <property type="entry name" value="GrpE"/>
    <property type="match status" value="1"/>
</dbReference>
<dbReference type="PRINTS" id="PR00773">
    <property type="entry name" value="GRPEPROTEIN"/>
</dbReference>
<dbReference type="SUPFAM" id="SSF58014">
    <property type="entry name" value="Coiled-coil domain of nucleotide exchange factor GrpE"/>
    <property type="match status" value="1"/>
</dbReference>
<dbReference type="SUPFAM" id="SSF51064">
    <property type="entry name" value="Head domain of nucleotide exchange factor GrpE"/>
    <property type="match status" value="1"/>
</dbReference>
<dbReference type="PROSITE" id="PS01071">
    <property type="entry name" value="GRPE"/>
    <property type="match status" value="1"/>
</dbReference>